<proteinExistence type="inferred from homology"/>
<accession>P0ADH6</accession>
<accession>P04742</accession>
<accession>Q47219</accession>
<evidence type="ECO:0000250" key="1"/>
<evidence type="ECO:0000255" key="2">
    <source>
        <dbReference type="PROSITE-ProRule" id="PRU01246"/>
    </source>
</evidence>
<evidence type="ECO:0000305" key="3"/>
<dbReference type="EMBL" id="AE005174">
    <property type="protein sequence ID" value="AAG59494.1"/>
    <property type="molecule type" value="Genomic_DNA"/>
</dbReference>
<dbReference type="EMBL" id="BA000007">
    <property type="protein sequence ID" value="BAB38694.1"/>
    <property type="molecule type" value="Genomic_DNA"/>
</dbReference>
<dbReference type="PIR" id="B86129">
    <property type="entry name" value="B86129"/>
</dbReference>
<dbReference type="PIR" id="G91287">
    <property type="entry name" value="G91287"/>
</dbReference>
<dbReference type="RefSeq" id="NP_313298.1">
    <property type="nucleotide sequence ID" value="NC_002695.1"/>
</dbReference>
<dbReference type="RefSeq" id="WP_000790583.1">
    <property type="nucleotide sequence ID" value="NZ_VOAI01000002.1"/>
</dbReference>
<dbReference type="SMR" id="P0ADH6"/>
<dbReference type="STRING" id="155864.Z5910"/>
<dbReference type="GeneID" id="75206128"/>
<dbReference type="GeneID" id="913695"/>
<dbReference type="KEGG" id="ece:Z5910"/>
<dbReference type="KEGG" id="ecs:ECs_5271"/>
<dbReference type="PATRIC" id="fig|386585.9.peg.5507"/>
<dbReference type="eggNOG" id="COG0582">
    <property type="taxonomic scope" value="Bacteria"/>
</dbReference>
<dbReference type="HOGENOM" id="CLU_027562_39_0_6"/>
<dbReference type="OMA" id="ARCVYIH"/>
<dbReference type="Proteomes" id="UP000000558">
    <property type="component" value="Chromosome"/>
</dbReference>
<dbReference type="Proteomes" id="UP000002519">
    <property type="component" value="Chromosome"/>
</dbReference>
<dbReference type="GO" id="GO:0003677">
    <property type="term" value="F:DNA binding"/>
    <property type="evidence" value="ECO:0007669"/>
    <property type="project" value="InterPro"/>
</dbReference>
<dbReference type="GO" id="GO:0015074">
    <property type="term" value="P:DNA integration"/>
    <property type="evidence" value="ECO:0007669"/>
    <property type="project" value="UniProtKB-KW"/>
</dbReference>
<dbReference type="GO" id="GO:0006310">
    <property type="term" value="P:DNA recombination"/>
    <property type="evidence" value="ECO:0007669"/>
    <property type="project" value="UniProtKB-KW"/>
</dbReference>
<dbReference type="FunFam" id="1.10.443.10:FF:000003">
    <property type="entry name" value="Type 1 fimbriae regulatory protein FimE"/>
    <property type="match status" value="1"/>
</dbReference>
<dbReference type="Gene3D" id="1.10.443.10">
    <property type="entry name" value="Intergrase catalytic core"/>
    <property type="match status" value="1"/>
</dbReference>
<dbReference type="InterPro" id="IPR011010">
    <property type="entry name" value="DNA_brk_join_enz"/>
</dbReference>
<dbReference type="InterPro" id="IPR013762">
    <property type="entry name" value="Integrase-like_cat_sf"/>
</dbReference>
<dbReference type="InterPro" id="IPR002104">
    <property type="entry name" value="Integrase_catalytic"/>
</dbReference>
<dbReference type="InterPro" id="IPR050090">
    <property type="entry name" value="Tyrosine_recombinase_XerCD"/>
</dbReference>
<dbReference type="NCBIfam" id="NF007370">
    <property type="entry name" value="PRK09870.1"/>
    <property type="match status" value="1"/>
</dbReference>
<dbReference type="NCBIfam" id="NF007371">
    <property type="entry name" value="PRK09871.1"/>
    <property type="match status" value="1"/>
</dbReference>
<dbReference type="PANTHER" id="PTHR30349">
    <property type="entry name" value="PHAGE INTEGRASE-RELATED"/>
    <property type="match status" value="1"/>
</dbReference>
<dbReference type="PANTHER" id="PTHR30349:SF62">
    <property type="entry name" value="TYPE 1 FIMBRIAE REGULATORY PROTEIN FIMB-RELATED"/>
    <property type="match status" value="1"/>
</dbReference>
<dbReference type="Pfam" id="PF00589">
    <property type="entry name" value="Phage_integrase"/>
    <property type="match status" value="1"/>
</dbReference>
<dbReference type="SUPFAM" id="SSF56349">
    <property type="entry name" value="DNA breaking-rejoining enzymes"/>
    <property type="match status" value="1"/>
</dbReference>
<dbReference type="PROSITE" id="PS51898">
    <property type="entry name" value="TYR_RECOMBINASE"/>
    <property type="match status" value="1"/>
</dbReference>
<sequence>MKNKADNKKRNFLTHSEIESLLKAANTGPHAARNYCLTLLCFIHGFRASEICRLRISDIDLKAKCIYIHRLKKGFSTTHPLLNKEVQALKNWLSIRTSYPHAESEWVFLSRKGNPLSRQQFYHIISTSGGNAGLSLEIHPHMLRHSCGFALANMGIDTRLIQDYLGHRNIRHTVWYTASNAGRFYGIWDRARGRQRHAVL</sequence>
<comment type="function">
    <text evidence="1">FimB is one of the 2 regulatory proteins which control the phase variation of type 1 fimbriae in E.coli. These proteins mediate the periodic inversion of a 300bp DNA segment that harbors the promoter for the fimbrial structural gene, fimA. FimB switches fimA on (By similarity).</text>
</comment>
<comment type="similarity">
    <text evidence="3">Belongs to the 'phage' integrase family.</text>
</comment>
<keyword id="KW-0229">DNA integration</keyword>
<keyword id="KW-0233">DNA recombination</keyword>
<keyword id="KW-1029">Fimbrium biogenesis</keyword>
<keyword id="KW-1185">Reference proteome</keyword>
<keyword id="KW-0804">Transcription</keyword>
<keyword id="KW-0805">Transcription regulation</keyword>
<gene>
    <name type="primary">fimB</name>
    <name type="ordered locus">Z5910</name>
    <name type="ordered locus">ECs5271</name>
</gene>
<organism>
    <name type="scientific">Escherichia coli O157:H7</name>
    <dbReference type="NCBI Taxonomy" id="83334"/>
    <lineage>
        <taxon>Bacteria</taxon>
        <taxon>Pseudomonadati</taxon>
        <taxon>Pseudomonadota</taxon>
        <taxon>Gammaproteobacteria</taxon>
        <taxon>Enterobacterales</taxon>
        <taxon>Enterobacteriaceae</taxon>
        <taxon>Escherichia</taxon>
    </lineage>
</organism>
<protein>
    <recommendedName>
        <fullName>Type 1 fimbriae regulatory protein FimB</fullName>
    </recommendedName>
</protein>
<reference key="1">
    <citation type="journal article" date="2001" name="Nature">
        <title>Genome sequence of enterohaemorrhagic Escherichia coli O157:H7.</title>
        <authorList>
            <person name="Perna N.T."/>
            <person name="Plunkett G. III"/>
            <person name="Burland V."/>
            <person name="Mau B."/>
            <person name="Glasner J.D."/>
            <person name="Rose D.J."/>
            <person name="Mayhew G.F."/>
            <person name="Evans P.S."/>
            <person name="Gregor J."/>
            <person name="Kirkpatrick H.A."/>
            <person name="Posfai G."/>
            <person name="Hackett J."/>
            <person name="Klink S."/>
            <person name="Boutin A."/>
            <person name="Shao Y."/>
            <person name="Miller L."/>
            <person name="Grotbeck E.J."/>
            <person name="Davis N.W."/>
            <person name="Lim A."/>
            <person name="Dimalanta E.T."/>
            <person name="Potamousis K."/>
            <person name="Apodaca J."/>
            <person name="Anantharaman T.S."/>
            <person name="Lin J."/>
            <person name="Yen G."/>
            <person name="Schwartz D.C."/>
            <person name="Welch R.A."/>
            <person name="Blattner F.R."/>
        </authorList>
    </citation>
    <scope>NUCLEOTIDE SEQUENCE [LARGE SCALE GENOMIC DNA]</scope>
    <source>
        <strain>O157:H7 / EDL933 / ATCC 700927 / EHEC</strain>
    </source>
</reference>
<reference key="2">
    <citation type="journal article" date="2001" name="DNA Res.">
        <title>Complete genome sequence of enterohemorrhagic Escherichia coli O157:H7 and genomic comparison with a laboratory strain K-12.</title>
        <authorList>
            <person name="Hayashi T."/>
            <person name="Makino K."/>
            <person name="Ohnishi M."/>
            <person name="Kurokawa K."/>
            <person name="Ishii K."/>
            <person name="Yokoyama K."/>
            <person name="Han C.-G."/>
            <person name="Ohtsubo E."/>
            <person name="Nakayama K."/>
            <person name="Murata T."/>
            <person name="Tanaka M."/>
            <person name="Tobe T."/>
            <person name="Iida T."/>
            <person name="Takami H."/>
            <person name="Honda T."/>
            <person name="Sasakawa C."/>
            <person name="Ogasawara N."/>
            <person name="Yasunaga T."/>
            <person name="Kuhara S."/>
            <person name="Shiba T."/>
            <person name="Hattori M."/>
            <person name="Shinagawa H."/>
        </authorList>
    </citation>
    <scope>NUCLEOTIDE SEQUENCE [LARGE SCALE GENOMIC DNA]</scope>
    <source>
        <strain>O157:H7 / Sakai / RIMD 0509952 / EHEC</strain>
    </source>
</reference>
<feature type="chain" id="PRO_0000197540" description="Type 1 fimbriae regulatory protein FimB">
    <location>
        <begin position="1"/>
        <end position="200"/>
    </location>
</feature>
<feature type="domain" description="Tyr recombinase" evidence="2">
    <location>
        <begin position="8"/>
        <end position="189"/>
    </location>
</feature>
<feature type="active site" evidence="2">
    <location>
        <position position="47"/>
    </location>
</feature>
<feature type="active site" evidence="2">
    <location>
        <position position="72"/>
    </location>
</feature>
<feature type="active site" evidence="2">
    <location>
        <position position="141"/>
    </location>
</feature>
<feature type="active site" evidence="2">
    <location>
        <position position="144"/>
    </location>
</feature>
<feature type="active site" evidence="2">
    <location>
        <position position="167"/>
    </location>
</feature>
<feature type="active site" description="O-(3'-phospho-DNA)-tyrosine intermediate" evidence="2">
    <location>
        <position position="176"/>
    </location>
</feature>
<name>FIMB_ECO57</name>